<comment type="function">
    <text evidence="1">Participates actively in the response to hyperosmotic and heat shock by preventing the aggregation of stress-denatured proteins and by disaggregating proteins, also in an autonomous, DnaK-independent fashion. Unfolded proteins bind initially to DnaJ; upon interaction with the DnaJ-bound protein, DnaK hydrolyzes its bound ATP, resulting in the formation of a stable complex. GrpE releases ADP from DnaK; ATP binding to DnaK triggers the release of the substrate protein, thus completing the reaction cycle. Several rounds of ATP-dependent interactions between DnaJ, DnaK and GrpE are required for fully efficient folding. Also involved, together with DnaK and GrpE, in the DNA replication of plasmids through activation of initiation proteins.</text>
</comment>
<comment type="cofactor">
    <cofactor evidence="1">
        <name>Zn(2+)</name>
        <dbReference type="ChEBI" id="CHEBI:29105"/>
    </cofactor>
    <text evidence="1">Binds 2 Zn(2+) ions per monomer.</text>
</comment>
<comment type="subunit">
    <text evidence="1">Homodimer.</text>
</comment>
<comment type="subcellular location">
    <subcellularLocation>
        <location evidence="1">Cytoplasm</location>
    </subcellularLocation>
</comment>
<comment type="domain">
    <text evidence="1">The J domain is necessary and sufficient to stimulate DnaK ATPase activity. Zinc center 1 plays an important role in the autonomous, DnaK-independent chaperone activity of DnaJ. Zinc center 2 is essential for interaction with DnaK and for DnaJ activity.</text>
</comment>
<comment type="similarity">
    <text evidence="1">Belongs to the DnaJ family.</text>
</comment>
<feature type="chain" id="PRO_1000085220" description="Chaperone protein DnaJ">
    <location>
        <begin position="1"/>
        <end position="371"/>
    </location>
</feature>
<feature type="domain" description="J" evidence="1">
    <location>
        <begin position="5"/>
        <end position="70"/>
    </location>
</feature>
<feature type="repeat" description="CXXCXGXG motif">
    <location>
        <begin position="152"/>
        <end position="159"/>
    </location>
</feature>
<feature type="repeat" description="CXXCXGXG motif">
    <location>
        <begin position="169"/>
        <end position="176"/>
    </location>
</feature>
<feature type="repeat" description="CXXCXGXG motif">
    <location>
        <begin position="191"/>
        <end position="198"/>
    </location>
</feature>
<feature type="repeat" description="CXXCXGXG motif">
    <location>
        <begin position="205"/>
        <end position="212"/>
    </location>
</feature>
<feature type="zinc finger region" description="CR-type" evidence="1">
    <location>
        <begin position="139"/>
        <end position="217"/>
    </location>
</feature>
<feature type="binding site" evidence="1">
    <location>
        <position position="152"/>
    </location>
    <ligand>
        <name>Zn(2+)</name>
        <dbReference type="ChEBI" id="CHEBI:29105"/>
        <label>1</label>
    </ligand>
</feature>
<feature type="binding site" evidence="1">
    <location>
        <position position="155"/>
    </location>
    <ligand>
        <name>Zn(2+)</name>
        <dbReference type="ChEBI" id="CHEBI:29105"/>
        <label>1</label>
    </ligand>
</feature>
<feature type="binding site" evidence="1">
    <location>
        <position position="169"/>
    </location>
    <ligand>
        <name>Zn(2+)</name>
        <dbReference type="ChEBI" id="CHEBI:29105"/>
        <label>2</label>
    </ligand>
</feature>
<feature type="binding site" evidence="1">
    <location>
        <position position="172"/>
    </location>
    <ligand>
        <name>Zn(2+)</name>
        <dbReference type="ChEBI" id="CHEBI:29105"/>
        <label>2</label>
    </ligand>
</feature>
<feature type="binding site" evidence="1">
    <location>
        <position position="191"/>
    </location>
    <ligand>
        <name>Zn(2+)</name>
        <dbReference type="ChEBI" id="CHEBI:29105"/>
        <label>2</label>
    </ligand>
</feature>
<feature type="binding site" evidence="1">
    <location>
        <position position="194"/>
    </location>
    <ligand>
        <name>Zn(2+)</name>
        <dbReference type="ChEBI" id="CHEBI:29105"/>
        <label>2</label>
    </ligand>
</feature>
<feature type="binding site" evidence="1">
    <location>
        <position position="205"/>
    </location>
    <ligand>
        <name>Zn(2+)</name>
        <dbReference type="ChEBI" id="CHEBI:29105"/>
        <label>1</label>
    </ligand>
</feature>
<feature type="binding site" evidence="1">
    <location>
        <position position="208"/>
    </location>
    <ligand>
        <name>Zn(2+)</name>
        <dbReference type="ChEBI" id="CHEBI:29105"/>
        <label>1</label>
    </ligand>
</feature>
<gene>
    <name evidence="1" type="primary">dnaJ</name>
    <name type="ordered locus">LBL_2643</name>
</gene>
<organism>
    <name type="scientific">Leptospira borgpetersenii serovar Hardjo-bovis (strain L550)</name>
    <dbReference type="NCBI Taxonomy" id="355276"/>
    <lineage>
        <taxon>Bacteria</taxon>
        <taxon>Pseudomonadati</taxon>
        <taxon>Spirochaetota</taxon>
        <taxon>Spirochaetia</taxon>
        <taxon>Leptospirales</taxon>
        <taxon>Leptospiraceae</taxon>
        <taxon>Leptospira</taxon>
    </lineage>
</organism>
<reference key="1">
    <citation type="journal article" date="2006" name="Proc. Natl. Acad. Sci. U.S.A.">
        <title>Genome reduction in Leptospira borgpetersenii reflects limited transmission potential.</title>
        <authorList>
            <person name="Bulach D.M."/>
            <person name="Zuerner R.L."/>
            <person name="Wilson P."/>
            <person name="Seemann T."/>
            <person name="McGrath A."/>
            <person name="Cullen P.A."/>
            <person name="Davis J."/>
            <person name="Johnson M."/>
            <person name="Kuczek E."/>
            <person name="Alt D.P."/>
            <person name="Peterson-Burch B."/>
            <person name="Coppel R.L."/>
            <person name="Rood J.I."/>
            <person name="Davies J.K."/>
            <person name="Adler B."/>
        </authorList>
    </citation>
    <scope>NUCLEOTIDE SEQUENCE [LARGE SCALE GENOMIC DNA]</scope>
    <source>
        <strain>L550</strain>
    </source>
</reference>
<evidence type="ECO:0000255" key="1">
    <source>
        <dbReference type="HAMAP-Rule" id="MF_01152"/>
    </source>
</evidence>
<dbReference type="EMBL" id="CP000348">
    <property type="protein sequence ID" value="ABJ79997.1"/>
    <property type="molecule type" value="Genomic_DNA"/>
</dbReference>
<dbReference type="RefSeq" id="WP_011670943.1">
    <property type="nucleotide sequence ID" value="NC_008508.1"/>
</dbReference>
<dbReference type="SMR" id="Q04Y48"/>
<dbReference type="KEGG" id="lbl:LBL_2643"/>
<dbReference type="HOGENOM" id="CLU_017633_0_7_12"/>
<dbReference type="GO" id="GO:0005737">
    <property type="term" value="C:cytoplasm"/>
    <property type="evidence" value="ECO:0007669"/>
    <property type="project" value="UniProtKB-SubCell"/>
</dbReference>
<dbReference type="GO" id="GO:0005524">
    <property type="term" value="F:ATP binding"/>
    <property type="evidence" value="ECO:0007669"/>
    <property type="project" value="InterPro"/>
</dbReference>
<dbReference type="GO" id="GO:0031072">
    <property type="term" value="F:heat shock protein binding"/>
    <property type="evidence" value="ECO:0007669"/>
    <property type="project" value="InterPro"/>
</dbReference>
<dbReference type="GO" id="GO:0051082">
    <property type="term" value="F:unfolded protein binding"/>
    <property type="evidence" value="ECO:0007669"/>
    <property type="project" value="UniProtKB-UniRule"/>
</dbReference>
<dbReference type="GO" id="GO:0008270">
    <property type="term" value="F:zinc ion binding"/>
    <property type="evidence" value="ECO:0007669"/>
    <property type="project" value="UniProtKB-UniRule"/>
</dbReference>
<dbReference type="GO" id="GO:0051085">
    <property type="term" value="P:chaperone cofactor-dependent protein refolding"/>
    <property type="evidence" value="ECO:0007669"/>
    <property type="project" value="TreeGrafter"/>
</dbReference>
<dbReference type="GO" id="GO:0006260">
    <property type="term" value="P:DNA replication"/>
    <property type="evidence" value="ECO:0007669"/>
    <property type="project" value="UniProtKB-KW"/>
</dbReference>
<dbReference type="GO" id="GO:0042026">
    <property type="term" value="P:protein refolding"/>
    <property type="evidence" value="ECO:0007669"/>
    <property type="project" value="TreeGrafter"/>
</dbReference>
<dbReference type="GO" id="GO:0009408">
    <property type="term" value="P:response to heat"/>
    <property type="evidence" value="ECO:0007669"/>
    <property type="project" value="InterPro"/>
</dbReference>
<dbReference type="CDD" id="cd06257">
    <property type="entry name" value="DnaJ"/>
    <property type="match status" value="1"/>
</dbReference>
<dbReference type="CDD" id="cd10747">
    <property type="entry name" value="DnaJ_C"/>
    <property type="match status" value="1"/>
</dbReference>
<dbReference type="CDD" id="cd10719">
    <property type="entry name" value="DnaJ_zf"/>
    <property type="match status" value="1"/>
</dbReference>
<dbReference type="FunFam" id="1.10.287.110:FF:000034">
    <property type="entry name" value="Chaperone protein DnaJ"/>
    <property type="match status" value="1"/>
</dbReference>
<dbReference type="FunFam" id="2.60.260.20:FF:000005">
    <property type="entry name" value="Chaperone protein dnaJ 1, mitochondrial"/>
    <property type="match status" value="1"/>
</dbReference>
<dbReference type="FunFam" id="2.10.230.10:FF:000002">
    <property type="entry name" value="Molecular chaperone DnaJ"/>
    <property type="match status" value="1"/>
</dbReference>
<dbReference type="Gene3D" id="1.10.287.110">
    <property type="entry name" value="DnaJ domain"/>
    <property type="match status" value="1"/>
</dbReference>
<dbReference type="Gene3D" id="2.10.230.10">
    <property type="entry name" value="Heat shock protein DnaJ, cysteine-rich domain"/>
    <property type="match status" value="1"/>
</dbReference>
<dbReference type="Gene3D" id="2.60.260.20">
    <property type="entry name" value="Urease metallochaperone UreE, N-terminal domain"/>
    <property type="match status" value="2"/>
</dbReference>
<dbReference type="HAMAP" id="MF_01152">
    <property type="entry name" value="DnaJ"/>
    <property type="match status" value="1"/>
</dbReference>
<dbReference type="InterPro" id="IPR012724">
    <property type="entry name" value="DnaJ"/>
</dbReference>
<dbReference type="InterPro" id="IPR002939">
    <property type="entry name" value="DnaJ_C"/>
</dbReference>
<dbReference type="InterPro" id="IPR001623">
    <property type="entry name" value="DnaJ_domain"/>
</dbReference>
<dbReference type="InterPro" id="IPR018253">
    <property type="entry name" value="DnaJ_domain_CS"/>
</dbReference>
<dbReference type="InterPro" id="IPR008971">
    <property type="entry name" value="HSP40/DnaJ_pept-bd"/>
</dbReference>
<dbReference type="InterPro" id="IPR001305">
    <property type="entry name" value="HSP_DnaJ_Cys-rich_dom"/>
</dbReference>
<dbReference type="InterPro" id="IPR036410">
    <property type="entry name" value="HSP_DnaJ_Cys-rich_dom_sf"/>
</dbReference>
<dbReference type="InterPro" id="IPR036869">
    <property type="entry name" value="J_dom_sf"/>
</dbReference>
<dbReference type="NCBIfam" id="TIGR02349">
    <property type="entry name" value="DnaJ_bact"/>
    <property type="match status" value="1"/>
</dbReference>
<dbReference type="NCBIfam" id="NF008035">
    <property type="entry name" value="PRK10767.1"/>
    <property type="match status" value="1"/>
</dbReference>
<dbReference type="NCBIfam" id="NF010879">
    <property type="entry name" value="PRK14286.1"/>
    <property type="match status" value="1"/>
</dbReference>
<dbReference type="PANTHER" id="PTHR43096:SF48">
    <property type="entry name" value="CHAPERONE PROTEIN DNAJ"/>
    <property type="match status" value="1"/>
</dbReference>
<dbReference type="PANTHER" id="PTHR43096">
    <property type="entry name" value="DNAJ HOMOLOG 1, MITOCHONDRIAL-RELATED"/>
    <property type="match status" value="1"/>
</dbReference>
<dbReference type="Pfam" id="PF00226">
    <property type="entry name" value="DnaJ"/>
    <property type="match status" value="1"/>
</dbReference>
<dbReference type="Pfam" id="PF01556">
    <property type="entry name" value="DnaJ_C"/>
    <property type="match status" value="1"/>
</dbReference>
<dbReference type="Pfam" id="PF00684">
    <property type="entry name" value="DnaJ_CXXCXGXG"/>
    <property type="match status" value="1"/>
</dbReference>
<dbReference type="PRINTS" id="PR00625">
    <property type="entry name" value="JDOMAIN"/>
</dbReference>
<dbReference type="SMART" id="SM00271">
    <property type="entry name" value="DnaJ"/>
    <property type="match status" value="1"/>
</dbReference>
<dbReference type="SUPFAM" id="SSF46565">
    <property type="entry name" value="Chaperone J-domain"/>
    <property type="match status" value="1"/>
</dbReference>
<dbReference type="SUPFAM" id="SSF57938">
    <property type="entry name" value="DnaJ/Hsp40 cysteine-rich domain"/>
    <property type="match status" value="1"/>
</dbReference>
<dbReference type="SUPFAM" id="SSF49493">
    <property type="entry name" value="HSP40/DnaJ peptide-binding domain"/>
    <property type="match status" value="2"/>
</dbReference>
<dbReference type="PROSITE" id="PS00636">
    <property type="entry name" value="DNAJ_1"/>
    <property type="match status" value="1"/>
</dbReference>
<dbReference type="PROSITE" id="PS50076">
    <property type="entry name" value="DNAJ_2"/>
    <property type="match status" value="1"/>
</dbReference>
<dbReference type="PROSITE" id="PS51188">
    <property type="entry name" value="ZF_CR"/>
    <property type="match status" value="1"/>
</dbReference>
<protein>
    <recommendedName>
        <fullName evidence="1">Chaperone protein DnaJ</fullName>
    </recommendedName>
</protein>
<name>DNAJ_LEPBL</name>
<accession>Q04Y48</accession>
<keyword id="KW-0143">Chaperone</keyword>
<keyword id="KW-0963">Cytoplasm</keyword>
<keyword id="KW-0235">DNA replication</keyword>
<keyword id="KW-0479">Metal-binding</keyword>
<keyword id="KW-0677">Repeat</keyword>
<keyword id="KW-0346">Stress response</keyword>
<keyword id="KW-0862">Zinc</keyword>
<keyword id="KW-0863">Zinc-finger</keyword>
<sequence length="371" mass="40021">MSERSYYDILGVSKSANDEEIKSAYRKLAIKYHPDKNKGNKESEEKFKEATEAYEILRDPKKRQAYDQFGKAGVGAGAGGFGQGAYTDFSDIFGDFGDIFGDFFGGGRGGFGGGRRSGSQRGSDLRYNLEVSLEDAALGREYKIEIPRLESCGDCNGSGAAKGSSPTTCPDCGGSGQIRRTQGFFSVATTCPTCRGKGTTISNPCKTCGGQGLQEKRRTINIKIPPGVETGSRLKVSGEGEAGPNGGSHGDLYVVTHIKRHELFERQGNDLILVRKITLAQAILGAEIEVPTIDGKKAKMKIPEGTESGQVFRLKGHGMPYLGAYGKGDQHVVVKIEIPKKITRRQRELIEAFARESGENIPGSKGKIFTK</sequence>
<proteinExistence type="inferred from homology"/>